<name>CMR1_YEAST</name>
<feature type="chain" id="PRO_0000240874" description="DNA damage-binding protein CMR1">
    <location>
        <begin position="1"/>
        <end position="522"/>
    </location>
</feature>
<feature type="repeat" description="WD 1" evidence="1">
    <location>
        <begin position="183"/>
        <end position="224"/>
    </location>
</feature>
<feature type="repeat" description="WD 2" evidence="1">
    <location>
        <begin position="239"/>
        <end position="281"/>
    </location>
</feature>
<feature type="repeat" description="WD 3" evidence="1">
    <location>
        <begin position="287"/>
        <end position="327"/>
    </location>
</feature>
<feature type="repeat" description="WD 4" evidence="1">
    <location>
        <begin position="331"/>
        <end position="371"/>
    </location>
</feature>
<feature type="repeat" description="WD 5" evidence="1">
    <location>
        <begin position="388"/>
        <end position="427"/>
    </location>
</feature>
<feature type="repeat" description="WD 6" evidence="1">
    <location>
        <begin position="442"/>
        <end position="481"/>
    </location>
</feature>
<feature type="repeat" description="WD 7" evidence="1">
    <location>
        <begin position="482"/>
        <end position="521"/>
    </location>
</feature>
<feature type="region of interest" description="Disordered" evidence="2">
    <location>
        <begin position="38"/>
        <end position="100"/>
    </location>
</feature>
<feature type="compositionally biased region" description="Polar residues" evidence="2">
    <location>
        <begin position="54"/>
        <end position="63"/>
    </location>
</feature>
<feature type="compositionally biased region" description="Basic and acidic residues" evidence="2">
    <location>
        <begin position="75"/>
        <end position="84"/>
    </location>
</feature>
<feature type="modified residue" description="Phosphoserine" evidence="13">
    <location>
        <position position="64"/>
    </location>
</feature>
<feature type="modified residue" description="Phosphothreonine" evidence="12">
    <location>
        <position position="69"/>
    </location>
</feature>
<feature type="modified residue" description="Phosphoserine" evidence="13 14">
    <location>
        <position position="224"/>
    </location>
</feature>
<keyword id="KW-0963">Cytoplasm</keyword>
<keyword id="KW-0227">DNA damage</keyword>
<keyword id="KW-0238">DNA-binding</keyword>
<keyword id="KW-0539">Nucleus</keyword>
<keyword id="KW-0597">Phosphoprotein</keyword>
<keyword id="KW-1185">Reference proteome</keyword>
<keyword id="KW-0677">Repeat</keyword>
<keyword id="KW-0853">WD repeat</keyword>
<evidence type="ECO:0000255" key="1"/>
<evidence type="ECO:0000256" key="2">
    <source>
        <dbReference type="SAM" id="MobiDB-lite"/>
    </source>
</evidence>
<evidence type="ECO:0000269" key="3">
    <source>
    </source>
</evidence>
<evidence type="ECO:0000269" key="4">
    <source>
    </source>
</evidence>
<evidence type="ECO:0000269" key="5">
    <source>
    </source>
</evidence>
<evidence type="ECO:0000269" key="6">
    <source>
    </source>
</evidence>
<evidence type="ECO:0000303" key="7">
    <source>
    </source>
</evidence>
<evidence type="ECO:0000305" key="8"/>
<evidence type="ECO:0000305" key="9">
    <source>
    </source>
</evidence>
<evidence type="ECO:0000305" key="10">
    <source>
    </source>
</evidence>
<evidence type="ECO:0000312" key="11">
    <source>
        <dbReference type="SGD" id="S000002315"/>
    </source>
</evidence>
<evidence type="ECO:0007744" key="12">
    <source>
    </source>
</evidence>
<evidence type="ECO:0007744" key="13">
    <source>
    </source>
</evidence>
<evidence type="ECO:0007744" key="14">
    <source>
    </source>
</evidence>
<comment type="function">
    <text evidence="5 10">DNA-binding protein that binds to both single- and double-stranded DNA. Binds preferentially to UV-damaged DNA in vitro (PubMed:22367945). May be involved in DNA-metabolic processes (PubMed:23349438).</text>
</comment>
<comment type="interaction">
    <interactant intactId="EBI-35343">
        <id>Q12510</id>
    </interactant>
    <interactant intactId="EBI-22980">
        <id>P43603</id>
        <label>LSB3</label>
    </interactant>
    <organismsDiffer>false</organismsDiffer>
    <experiments>2</experiments>
</comment>
<comment type="interaction">
    <interactant intactId="EBI-35343">
        <id>Q12510</id>
    </interactant>
    <interactant intactId="EBI-24460">
        <id>P32793</id>
        <label>YSC84</label>
    </interactant>
    <organismsDiffer>false</organismsDiffer>
    <experiments>2</experiments>
</comment>
<comment type="subcellular location">
    <subcellularLocation>
        <location evidence="3">Cytoplasm</location>
    </subcellularLocation>
    <subcellularLocation>
        <location evidence="3">Nucleus</location>
    </subcellularLocation>
</comment>
<comment type="induction">
    <text evidence="6">Closely coexpressed with replication factor A (RF-A), the cohesion complex and the DNA polymerases alpha, delta and epsilon.</text>
</comment>
<comment type="miscellaneous">
    <text evidence="4">Present with 3810 molecules/cell in log phase SD medium.</text>
</comment>
<comment type="similarity">
    <text evidence="8">Belongs to the WD repeat DDB2/WDR76 family.</text>
</comment>
<dbReference type="EMBL" id="X97751">
    <property type="protein sequence ID" value="CAA66335.1"/>
    <property type="molecule type" value="Genomic_DNA"/>
</dbReference>
<dbReference type="EMBL" id="Z74204">
    <property type="protein sequence ID" value="CAA98730.1"/>
    <property type="molecule type" value="Genomic_DNA"/>
</dbReference>
<dbReference type="EMBL" id="BK006938">
    <property type="protein sequence ID" value="DAA11704.1"/>
    <property type="molecule type" value="Genomic_DNA"/>
</dbReference>
<dbReference type="PIR" id="S67704">
    <property type="entry name" value="S67704"/>
</dbReference>
<dbReference type="RefSeq" id="NP_010125.1">
    <property type="nucleotide sequence ID" value="NM_001180216.1"/>
</dbReference>
<dbReference type="SMR" id="Q12510"/>
<dbReference type="BioGRID" id="31907">
    <property type="interactions" value="706"/>
</dbReference>
<dbReference type="DIP" id="DIP-1004N"/>
<dbReference type="FunCoup" id="Q12510">
    <property type="interactions" value="979"/>
</dbReference>
<dbReference type="IntAct" id="Q12510">
    <property type="interactions" value="37"/>
</dbReference>
<dbReference type="MINT" id="Q12510"/>
<dbReference type="STRING" id="4932.YDL156W"/>
<dbReference type="iPTMnet" id="Q12510"/>
<dbReference type="PaxDb" id="4932-YDL156W"/>
<dbReference type="PeptideAtlas" id="Q12510"/>
<dbReference type="EnsemblFungi" id="YDL156W_mRNA">
    <property type="protein sequence ID" value="YDL156W"/>
    <property type="gene ID" value="YDL156W"/>
</dbReference>
<dbReference type="GeneID" id="851399"/>
<dbReference type="KEGG" id="sce:YDL156W"/>
<dbReference type="AGR" id="SGD:S000002315"/>
<dbReference type="SGD" id="S000002315">
    <property type="gene designation" value="CMR1"/>
</dbReference>
<dbReference type="VEuPathDB" id="FungiDB:YDL156W"/>
<dbReference type="eggNOG" id="KOG4328">
    <property type="taxonomic scope" value="Eukaryota"/>
</dbReference>
<dbReference type="GeneTree" id="ENSGT00510000048144"/>
<dbReference type="HOGENOM" id="CLU_017019_1_1_1"/>
<dbReference type="InParanoid" id="Q12510"/>
<dbReference type="OMA" id="DPNTLYW"/>
<dbReference type="OrthoDB" id="9890280at2759"/>
<dbReference type="BioCyc" id="YEAST:G3O-29551-MONOMER"/>
<dbReference type="BioGRID-ORCS" id="851399">
    <property type="hits" value="1 hit in 10 CRISPR screens"/>
</dbReference>
<dbReference type="PRO" id="PR:Q12510"/>
<dbReference type="Proteomes" id="UP000002311">
    <property type="component" value="Chromosome IV"/>
</dbReference>
<dbReference type="RNAct" id="Q12510">
    <property type="molecule type" value="protein"/>
</dbReference>
<dbReference type="GO" id="GO:0000785">
    <property type="term" value="C:chromatin"/>
    <property type="evidence" value="ECO:0000314"/>
    <property type="project" value="SGD"/>
</dbReference>
<dbReference type="GO" id="GO:0005737">
    <property type="term" value="C:cytoplasm"/>
    <property type="evidence" value="ECO:0000314"/>
    <property type="project" value="SGD"/>
</dbReference>
<dbReference type="GO" id="GO:0034399">
    <property type="term" value="C:nuclear periphery"/>
    <property type="evidence" value="ECO:0000314"/>
    <property type="project" value="SGD"/>
</dbReference>
<dbReference type="GO" id="GO:0005634">
    <property type="term" value="C:nucleus"/>
    <property type="evidence" value="ECO:0007005"/>
    <property type="project" value="SGD"/>
</dbReference>
<dbReference type="GO" id="GO:0003677">
    <property type="term" value="F:DNA binding"/>
    <property type="evidence" value="ECO:0000314"/>
    <property type="project" value="SGD"/>
</dbReference>
<dbReference type="GO" id="GO:0006974">
    <property type="term" value="P:DNA damage response"/>
    <property type="evidence" value="ECO:0007669"/>
    <property type="project" value="UniProtKB-KW"/>
</dbReference>
<dbReference type="GO" id="GO:2000001">
    <property type="term" value="P:regulation of DNA damage checkpoint"/>
    <property type="evidence" value="ECO:0000315"/>
    <property type="project" value="SGD"/>
</dbReference>
<dbReference type="FunFam" id="2.130.10.10:FF:000903">
    <property type="entry name" value="DNA damage-binding protein CMR1"/>
    <property type="match status" value="1"/>
</dbReference>
<dbReference type="Gene3D" id="2.130.10.10">
    <property type="entry name" value="YVTN repeat-like/Quinoprotein amine dehydrogenase"/>
    <property type="match status" value="1"/>
</dbReference>
<dbReference type="InterPro" id="IPR015943">
    <property type="entry name" value="WD40/YVTN_repeat-like_dom_sf"/>
</dbReference>
<dbReference type="InterPro" id="IPR019775">
    <property type="entry name" value="WD40_repeat_CS"/>
</dbReference>
<dbReference type="InterPro" id="IPR036322">
    <property type="entry name" value="WD40_repeat_dom_sf"/>
</dbReference>
<dbReference type="InterPro" id="IPR001680">
    <property type="entry name" value="WD40_rpt"/>
</dbReference>
<dbReference type="InterPro" id="IPR050853">
    <property type="entry name" value="WD_repeat_DNA-damage-binding"/>
</dbReference>
<dbReference type="PANTHER" id="PTHR14773">
    <property type="entry name" value="WD REPEAT-CONTAINING PROTEIN 76"/>
    <property type="match status" value="1"/>
</dbReference>
<dbReference type="PANTHER" id="PTHR14773:SF0">
    <property type="entry name" value="WD REPEAT-CONTAINING PROTEIN 76"/>
    <property type="match status" value="1"/>
</dbReference>
<dbReference type="Pfam" id="PF00400">
    <property type="entry name" value="WD40"/>
    <property type="match status" value="2"/>
</dbReference>
<dbReference type="SMART" id="SM00320">
    <property type="entry name" value="WD40"/>
    <property type="match status" value="4"/>
</dbReference>
<dbReference type="SUPFAM" id="SSF50978">
    <property type="entry name" value="WD40 repeat-like"/>
    <property type="match status" value="1"/>
</dbReference>
<dbReference type="PROSITE" id="PS00678">
    <property type="entry name" value="WD_REPEATS_1"/>
    <property type="match status" value="1"/>
</dbReference>
<dbReference type="PROSITE" id="PS50082">
    <property type="entry name" value="WD_REPEATS_2"/>
    <property type="match status" value="2"/>
</dbReference>
<dbReference type="PROSITE" id="PS50294">
    <property type="entry name" value="WD_REPEATS_REGION"/>
    <property type="match status" value="1"/>
</dbReference>
<organism>
    <name type="scientific">Saccharomyces cerevisiae (strain ATCC 204508 / S288c)</name>
    <name type="common">Baker's yeast</name>
    <dbReference type="NCBI Taxonomy" id="559292"/>
    <lineage>
        <taxon>Eukaryota</taxon>
        <taxon>Fungi</taxon>
        <taxon>Dikarya</taxon>
        <taxon>Ascomycota</taxon>
        <taxon>Saccharomycotina</taxon>
        <taxon>Saccharomycetes</taxon>
        <taxon>Saccharomycetales</taxon>
        <taxon>Saccharomycetaceae</taxon>
        <taxon>Saccharomyces</taxon>
    </lineage>
</organism>
<sequence length="522" mass="59156">MPELTEFQKKRLENIKRNNDLLKKLHLSGVASQIKHEAGVLEKSRAPAKKKQKTTNTRATKSASPTLPTRRSRRLRGESADDVKGIPNVNDNQLLKMGSPDGQDKNFIDAIKEKPVIGDVKLSDLIKDEDESALLEKFKRFNNGNFSSGDFFEEIKKRQGDVTGMDEFDLDLYDVFQPNEIKITYERISATYFHPAMEKKLIIAGDTSGTVGFWNVRDEPLADSEEDRMEEPDITRVKLFTKNVGRIDCFPADTSKILLTSYDGSIRSVHLNNLQSEEVLTLKNEYDDSLGISDCQFSYENPNVLFLTTLGGEFTTFDTRVKKSEYNLRRLADKKIGSMAINPMRPYEIATGSLDRTLKIWDTRNLVKKPEWSQYEDYPSHEIVSTYDSRLSVSAVSYSPTDGTLVCNGYDDTIRLFDVKSRDHLSAKLEPKLTIQHNCQTGRWTSILKARFKPNKNVFAIANMKRAIDIYNSEGQQLAHLPTATVPAVISWHPLRNWIAGGNSSGKIFLFTDDSGTIKQEE</sequence>
<accession>Q12510</accession>
<accession>D6VRJ4</accession>
<proteinExistence type="evidence at protein level"/>
<protein>
    <recommendedName>
        <fullName evidence="9">DNA damage-binding protein CMR1</fullName>
    </recommendedName>
    <alternativeName>
        <fullName evidence="7">Changed mutation rate protein 1</fullName>
    </alternativeName>
</protein>
<reference key="1">
    <citation type="journal article" date="1996" name="Yeast">
        <title>Analysis of a 23 kb region on the left arm of yeast chromosome IV.</title>
        <authorList>
            <person name="Delaveau T.T.D."/>
            <person name="Blugeon C."/>
            <person name="Jacq C."/>
            <person name="Perea J."/>
        </authorList>
    </citation>
    <scope>NUCLEOTIDE SEQUENCE [GENOMIC DNA]</scope>
    <source>
        <strain>ATCC 90840 / EAY235 / FY23</strain>
    </source>
</reference>
<reference key="2">
    <citation type="journal article" date="1997" name="Nature">
        <title>The nucleotide sequence of Saccharomyces cerevisiae chromosome IV.</title>
        <authorList>
            <person name="Jacq C."/>
            <person name="Alt-Moerbe J."/>
            <person name="Andre B."/>
            <person name="Arnold W."/>
            <person name="Bahr A."/>
            <person name="Ballesta J.P.G."/>
            <person name="Bargues M."/>
            <person name="Baron L."/>
            <person name="Becker A."/>
            <person name="Biteau N."/>
            <person name="Bloecker H."/>
            <person name="Blugeon C."/>
            <person name="Boskovic J."/>
            <person name="Brandt P."/>
            <person name="Brueckner M."/>
            <person name="Buitrago M.J."/>
            <person name="Coster F."/>
            <person name="Delaveau T."/>
            <person name="del Rey F."/>
            <person name="Dujon B."/>
            <person name="Eide L.G."/>
            <person name="Garcia-Cantalejo J.M."/>
            <person name="Goffeau A."/>
            <person name="Gomez-Peris A."/>
            <person name="Granotier C."/>
            <person name="Hanemann V."/>
            <person name="Hankeln T."/>
            <person name="Hoheisel J.D."/>
            <person name="Jaeger W."/>
            <person name="Jimenez A."/>
            <person name="Jonniaux J.-L."/>
            <person name="Kraemer C."/>
            <person name="Kuester H."/>
            <person name="Laamanen P."/>
            <person name="Legros Y."/>
            <person name="Louis E.J."/>
            <person name="Moeller-Rieker S."/>
            <person name="Monnet A."/>
            <person name="Moro M."/>
            <person name="Mueller-Auer S."/>
            <person name="Nussbaumer B."/>
            <person name="Paricio N."/>
            <person name="Paulin L."/>
            <person name="Perea J."/>
            <person name="Perez-Alonso M."/>
            <person name="Perez-Ortin J.E."/>
            <person name="Pohl T.M."/>
            <person name="Prydz H."/>
            <person name="Purnelle B."/>
            <person name="Rasmussen S.W."/>
            <person name="Remacha M.A."/>
            <person name="Revuelta J.L."/>
            <person name="Rieger M."/>
            <person name="Salom D."/>
            <person name="Saluz H.P."/>
            <person name="Saiz J.E."/>
            <person name="Saren A.-M."/>
            <person name="Schaefer M."/>
            <person name="Scharfe M."/>
            <person name="Schmidt E.R."/>
            <person name="Schneider C."/>
            <person name="Scholler P."/>
            <person name="Schwarz S."/>
            <person name="Soler-Mira A."/>
            <person name="Urrestarazu L.A."/>
            <person name="Verhasselt P."/>
            <person name="Vissers S."/>
            <person name="Voet M."/>
            <person name="Volckaert G."/>
            <person name="Wagner G."/>
            <person name="Wambutt R."/>
            <person name="Wedler E."/>
            <person name="Wedler H."/>
            <person name="Woelfl S."/>
            <person name="Harris D.E."/>
            <person name="Bowman S."/>
            <person name="Brown D."/>
            <person name="Churcher C.M."/>
            <person name="Connor R."/>
            <person name="Dedman K."/>
            <person name="Gentles S."/>
            <person name="Hamlin N."/>
            <person name="Hunt S."/>
            <person name="Jones L."/>
            <person name="McDonald S."/>
            <person name="Murphy L.D."/>
            <person name="Niblett D."/>
            <person name="Odell C."/>
            <person name="Oliver K."/>
            <person name="Rajandream M.A."/>
            <person name="Richards C."/>
            <person name="Shore L."/>
            <person name="Walsh S.V."/>
            <person name="Barrell B.G."/>
            <person name="Dietrich F.S."/>
            <person name="Mulligan J.T."/>
            <person name="Allen E."/>
            <person name="Araujo R."/>
            <person name="Aviles E."/>
            <person name="Berno A."/>
            <person name="Carpenter J."/>
            <person name="Chen E."/>
            <person name="Cherry J.M."/>
            <person name="Chung E."/>
            <person name="Duncan M."/>
            <person name="Hunicke-Smith S."/>
            <person name="Hyman R.W."/>
            <person name="Komp C."/>
            <person name="Lashkari D."/>
            <person name="Lew H."/>
            <person name="Lin D."/>
            <person name="Mosedale D."/>
            <person name="Nakahara K."/>
            <person name="Namath A."/>
            <person name="Oefner P."/>
            <person name="Oh C."/>
            <person name="Petel F.X."/>
            <person name="Roberts D."/>
            <person name="Schramm S."/>
            <person name="Schroeder M."/>
            <person name="Shogren T."/>
            <person name="Shroff N."/>
            <person name="Winant A."/>
            <person name="Yelton M.A."/>
            <person name="Botstein D."/>
            <person name="Davis R.W."/>
            <person name="Johnston M."/>
            <person name="Andrews S."/>
            <person name="Brinkman R."/>
            <person name="Cooper J."/>
            <person name="Ding H."/>
            <person name="Du Z."/>
            <person name="Favello A."/>
            <person name="Fulton L."/>
            <person name="Gattung S."/>
            <person name="Greco T."/>
            <person name="Hallsworth K."/>
            <person name="Hawkins J."/>
            <person name="Hillier L.W."/>
            <person name="Jier M."/>
            <person name="Johnson D."/>
            <person name="Johnston L."/>
            <person name="Kirsten J."/>
            <person name="Kucaba T."/>
            <person name="Langston Y."/>
            <person name="Latreille P."/>
            <person name="Le T."/>
            <person name="Mardis E."/>
            <person name="Menezes S."/>
            <person name="Miller N."/>
            <person name="Nhan M."/>
            <person name="Pauley A."/>
            <person name="Peluso D."/>
            <person name="Rifkin L."/>
            <person name="Riles L."/>
            <person name="Taich A."/>
            <person name="Trevaskis E."/>
            <person name="Vignati D."/>
            <person name="Wilcox L."/>
            <person name="Wohldman P."/>
            <person name="Vaudin M."/>
            <person name="Wilson R."/>
            <person name="Waterston R."/>
            <person name="Albermann K."/>
            <person name="Hani J."/>
            <person name="Heumann K."/>
            <person name="Kleine K."/>
            <person name="Mewes H.-W."/>
            <person name="Zollner A."/>
            <person name="Zaccaria P."/>
        </authorList>
    </citation>
    <scope>NUCLEOTIDE SEQUENCE [LARGE SCALE GENOMIC DNA]</scope>
    <source>
        <strain>ATCC 204508 / S288c</strain>
    </source>
</reference>
<reference key="3">
    <citation type="journal article" date="2014" name="G3 (Bethesda)">
        <title>The reference genome sequence of Saccharomyces cerevisiae: Then and now.</title>
        <authorList>
            <person name="Engel S.R."/>
            <person name="Dietrich F.S."/>
            <person name="Fisk D.G."/>
            <person name="Binkley G."/>
            <person name="Balakrishnan R."/>
            <person name="Costanzo M.C."/>
            <person name="Dwight S.S."/>
            <person name="Hitz B.C."/>
            <person name="Karra K."/>
            <person name="Nash R.S."/>
            <person name="Weng S."/>
            <person name="Wong E.D."/>
            <person name="Lloyd P."/>
            <person name="Skrzypek M.S."/>
            <person name="Miyasato S.R."/>
            <person name="Simison M."/>
            <person name="Cherry J.M."/>
        </authorList>
    </citation>
    <scope>GENOME REANNOTATION</scope>
    <source>
        <strain>ATCC 204508 / S288c</strain>
    </source>
</reference>
<reference key="4">
    <citation type="journal article" date="2003" name="Nature">
        <title>Global analysis of protein localization in budding yeast.</title>
        <authorList>
            <person name="Huh W.-K."/>
            <person name="Falvo J.V."/>
            <person name="Gerke L.C."/>
            <person name="Carroll A.S."/>
            <person name="Howson R.W."/>
            <person name="Weissman J.S."/>
            <person name="O'Shea E.K."/>
        </authorList>
    </citation>
    <scope>SUBCELLULAR LOCATION [LARGE SCALE ANALYSIS]</scope>
</reference>
<reference key="5">
    <citation type="journal article" date="2003" name="Nature">
        <title>Global analysis of protein expression in yeast.</title>
        <authorList>
            <person name="Ghaemmaghami S."/>
            <person name="Huh W.-K."/>
            <person name="Bower K."/>
            <person name="Howson R.W."/>
            <person name="Belle A."/>
            <person name="Dephoure N."/>
            <person name="O'Shea E.K."/>
            <person name="Weissman J.S."/>
        </authorList>
    </citation>
    <scope>LEVEL OF PROTEIN EXPRESSION [LARGE SCALE ANALYSIS]</scope>
</reference>
<reference key="6">
    <citation type="journal article" date="2007" name="Proc. Natl. Acad. Sci. U.S.A.">
        <title>Analysis of phosphorylation sites on proteins from Saccharomyces cerevisiae by electron transfer dissociation (ETD) mass spectrometry.</title>
        <authorList>
            <person name="Chi A."/>
            <person name="Huttenhower C."/>
            <person name="Geer L.Y."/>
            <person name="Coon J.J."/>
            <person name="Syka J.E.P."/>
            <person name="Bai D.L."/>
            <person name="Shabanowitz J."/>
            <person name="Burke D.J."/>
            <person name="Troyanskaya O.G."/>
            <person name="Hunt D.F."/>
        </authorList>
    </citation>
    <scope>PHOSPHORYLATION [LARGE SCALE ANALYSIS] AT THR-69</scope>
    <scope>IDENTIFICATION BY MASS SPECTROMETRY [LARGE SCALE ANALYSIS]</scope>
</reference>
<reference key="7">
    <citation type="journal article" date="2008" name="Mol. Cell. Proteomics">
        <title>A multidimensional chromatography technology for in-depth phosphoproteome analysis.</title>
        <authorList>
            <person name="Albuquerque C.P."/>
            <person name="Smolka M.B."/>
            <person name="Payne S.H."/>
            <person name="Bafna V."/>
            <person name="Eng J."/>
            <person name="Zhou H."/>
        </authorList>
    </citation>
    <scope>PHOSPHORYLATION [LARGE SCALE ANALYSIS] AT SER-64 AND SER-224</scope>
    <scope>IDENTIFICATION BY MASS SPECTROMETRY [LARGE SCALE ANALYSIS]</scope>
</reference>
<reference key="8">
    <citation type="journal article" date="2009" name="Science">
        <title>Global analysis of Cdk1 substrate phosphorylation sites provides insights into evolution.</title>
        <authorList>
            <person name="Holt L.J."/>
            <person name="Tuch B.B."/>
            <person name="Villen J."/>
            <person name="Johnson A.D."/>
            <person name="Gygi S.P."/>
            <person name="Morgan D.O."/>
        </authorList>
    </citation>
    <scope>PHOSPHORYLATION [LARGE SCALE ANALYSIS] AT SER-224</scope>
    <scope>IDENTIFICATION BY MASS SPECTROMETRY [LARGE SCALE ANALYSIS]</scope>
</reference>
<reference key="9">
    <citation type="journal article" date="2012" name="J. Microbiol.">
        <title>Saccharomyces cerevisiae Cmr1 protein preferentially binds to UV-damaged DNA in vitro.</title>
        <authorList>
            <person name="Choi D.H."/>
            <person name="Kwon S.H."/>
            <person name="Kim J.H."/>
            <person name="Bae S.H."/>
        </authorList>
    </citation>
    <scope>FUNCTION</scope>
</reference>
<reference key="10">
    <citation type="journal article" date="2013" name="J. R. Soc. Interface">
        <title>Yeast gene CMR1/YDL156W is consistently co-expressed with genes participating in DNA-metabolic processes in a variety of stringent clustering experiments.</title>
        <authorList>
            <person name="Abu-Jamous B."/>
            <person name="Fa R."/>
            <person name="Roberts D.J."/>
            <person name="Nandi A.K."/>
        </authorList>
    </citation>
    <scope>INDUCTION</scope>
</reference>
<gene>
    <name evidence="7" type="primary">CMR1</name>
    <name evidence="11" type="ordered locus">YDL156W</name>
    <name type="ORF">D1536</name>
</gene>